<comment type="function">
    <text evidence="1">Binds together with bS18 to 16S ribosomal RNA.</text>
</comment>
<comment type="similarity">
    <text evidence="1">Belongs to the bacterial ribosomal protein bS6 family.</text>
</comment>
<feature type="chain" id="PRO_1000120713" description="Small ribosomal subunit protein bS6">
    <location>
        <begin position="1"/>
        <end position="125"/>
    </location>
</feature>
<feature type="region of interest" description="Disordered" evidence="2">
    <location>
        <begin position="99"/>
        <end position="125"/>
    </location>
</feature>
<feature type="compositionally biased region" description="Basic and acidic residues" evidence="2">
    <location>
        <begin position="105"/>
        <end position="115"/>
    </location>
</feature>
<feature type="compositionally biased region" description="Polar residues" evidence="2">
    <location>
        <begin position="116"/>
        <end position="125"/>
    </location>
</feature>
<protein>
    <recommendedName>
        <fullName evidence="1">Small ribosomal subunit protein bS6</fullName>
    </recommendedName>
    <alternativeName>
        <fullName evidence="3">30S ribosomal protein S6</fullName>
    </alternativeName>
</protein>
<keyword id="KW-0687">Ribonucleoprotein</keyword>
<keyword id="KW-0689">Ribosomal protein</keyword>
<keyword id="KW-0694">RNA-binding</keyword>
<keyword id="KW-0699">rRNA-binding</keyword>
<proteinExistence type="inferred from homology"/>
<gene>
    <name evidence="1" type="primary">rpsF</name>
    <name type="ordered locus">Bpet3057</name>
</gene>
<evidence type="ECO:0000255" key="1">
    <source>
        <dbReference type="HAMAP-Rule" id="MF_00360"/>
    </source>
</evidence>
<evidence type="ECO:0000256" key="2">
    <source>
        <dbReference type="SAM" id="MobiDB-lite"/>
    </source>
</evidence>
<evidence type="ECO:0000305" key="3"/>
<sequence length="125" mass="14264">MRHYEVVFIVHPDQSEQVPAMVERYQTLVTGQGGAVHRLEDWGRRQLAYPIQKLVKAHYVCMNIECGQATLDELEHSFRYNDAVLRHLVIKTKKAQTSPSIMMKSVEREEARKASTEASAPAQAQ</sequence>
<organism>
    <name type="scientific">Bordetella petrii (strain ATCC BAA-461 / DSM 12804 / CCUG 43448)</name>
    <dbReference type="NCBI Taxonomy" id="340100"/>
    <lineage>
        <taxon>Bacteria</taxon>
        <taxon>Pseudomonadati</taxon>
        <taxon>Pseudomonadota</taxon>
        <taxon>Betaproteobacteria</taxon>
        <taxon>Burkholderiales</taxon>
        <taxon>Alcaligenaceae</taxon>
        <taxon>Bordetella</taxon>
    </lineage>
</organism>
<name>RS6_BORPD</name>
<dbReference type="EMBL" id="AM902716">
    <property type="protein sequence ID" value="CAP43399.1"/>
    <property type="molecule type" value="Genomic_DNA"/>
</dbReference>
<dbReference type="SMR" id="A9ITA2"/>
<dbReference type="STRING" id="94624.Bpet3057"/>
<dbReference type="KEGG" id="bpt:Bpet3057"/>
<dbReference type="eggNOG" id="COG0360">
    <property type="taxonomic scope" value="Bacteria"/>
</dbReference>
<dbReference type="Proteomes" id="UP000001225">
    <property type="component" value="Chromosome"/>
</dbReference>
<dbReference type="GO" id="GO:0022627">
    <property type="term" value="C:cytosolic small ribosomal subunit"/>
    <property type="evidence" value="ECO:0007669"/>
    <property type="project" value="TreeGrafter"/>
</dbReference>
<dbReference type="GO" id="GO:0070181">
    <property type="term" value="F:small ribosomal subunit rRNA binding"/>
    <property type="evidence" value="ECO:0007669"/>
    <property type="project" value="TreeGrafter"/>
</dbReference>
<dbReference type="GO" id="GO:0003735">
    <property type="term" value="F:structural constituent of ribosome"/>
    <property type="evidence" value="ECO:0007669"/>
    <property type="project" value="InterPro"/>
</dbReference>
<dbReference type="GO" id="GO:0006412">
    <property type="term" value="P:translation"/>
    <property type="evidence" value="ECO:0007669"/>
    <property type="project" value="UniProtKB-UniRule"/>
</dbReference>
<dbReference type="CDD" id="cd00473">
    <property type="entry name" value="bS6"/>
    <property type="match status" value="1"/>
</dbReference>
<dbReference type="Gene3D" id="3.30.70.60">
    <property type="match status" value="1"/>
</dbReference>
<dbReference type="HAMAP" id="MF_00360">
    <property type="entry name" value="Ribosomal_bS6"/>
    <property type="match status" value="1"/>
</dbReference>
<dbReference type="InterPro" id="IPR000529">
    <property type="entry name" value="Ribosomal_bS6"/>
</dbReference>
<dbReference type="InterPro" id="IPR035980">
    <property type="entry name" value="Ribosomal_bS6_sf"/>
</dbReference>
<dbReference type="InterPro" id="IPR020814">
    <property type="entry name" value="Ribosomal_S6_plastid/chlpt"/>
</dbReference>
<dbReference type="InterPro" id="IPR014717">
    <property type="entry name" value="Transl_elong_EF1B/ribsomal_bS6"/>
</dbReference>
<dbReference type="NCBIfam" id="TIGR00166">
    <property type="entry name" value="S6"/>
    <property type="match status" value="1"/>
</dbReference>
<dbReference type="PANTHER" id="PTHR21011">
    <property type="entry name" value="MITOCHONDRIAL 28S RIBOSOMAL PROTEIN S6"/>
    <property type="match status" value="1"/>
</dbReference>
<dbReference type="PANTHER" id="PTHR21011:SF1">
    <property type="entry name" value="SMALL RIBOSOMAL SUBUNIT PROTEIN BS6M"/>
    <property type="match status" value="1"/>
</dbReference>
<dbReference type="Pfam" id="PF01250">
    <property type="entry name" value="Ribosomal_S6"/>
    <property type="match status" value="1"/>
</dbReference>
<dbReference type="SUPFAM" id="SSF54995">
    <property type="entry name" value="Ribosomal protein S6"/>
    <property type="match status" value="1"/>
</dbReference>
<accession>A9ITA2</accession>
<reference key="1">
    <citation type="journal article" date="2008" name="BMC Genomics">
        <title>The missing link: Bordetella petrii is endowed with both the metabolic versatility of environmental bacteria and virulence traits of pathogenic Bordetellae.</title>
        <authorList>
            <person name="Gross R."/>
            <person name="Guzman C.A."/>
            <person name="Sebaihia M."/>
            <person name="Martin dos Santos V.A.P."/>
            <person name="Pieper D.H."/>
            <person name="Koebnik R."/>
            <person name="Lechner M."/>
            <person name="Bartels D."/>
            <person name="Buhrmester J."/>
            <person name="Choudhuri J.V."/>
            <person name="Ebensen T."/>
            <person name="Gaigalat L."/>
            <person name="Herrmann S."/>
            <person name="Khachane A.N."/>
            <person name="Larisch C."/>
            <person name="Link S."/>
            <person name="Linke B."/>
            <person name="Meyer F."/>
            <person name="Mormann S."/>
            <person name="Nakunst D."/>
            <person name="Rueckert C."/>
            <person name="Schneiker-Bekel S."/>
            <person name="Schulze K."/>
            <person name="Voerholter F.-J."/>
            <person name="Yevsa T."/>
            <person name="Engle J.T."/>
            <person name="Goldman W.E."/>
            <person name="Puehler A."/>
            <person name="Goebel U.B."/>
            <person name="Goesmann A."/>
            <person name="Bloecker H."/>
            <person name="Kaiser O."/>
            <person name="Martinez-Arias R."/>
        </authorList>
    </citation>
    <scope>NUCLEOTIDE SEQUENCE [LARGE SCALE GENOMIC DNA]</scope>
    <source>
        <strain>ATCC BAA-461 / DSM 12804 / CCUG 43448</strain>
    </source>
</reference>